<reference key="1">
    <citation type="journal article" date="2010" name="Genome Biol. Evol.">
        <title>Continuing evolution of Burkholderia mallei through genome reduction and large-scale rearrangements.</title>
        <authorList>
            <person name="Losada L."/>
            <person name="Ronning C.M."/>
            <person name="DeShazer D."/>
            <person name="Woods D."/>
            <person name="Fedorova N."/>
            <person name="Kim H.S."/>
            <person name="Shabalina S.A."/>
            <person name="Pearson T.R."/>
            <person name="Brinkac L."/>
            <person name="Tan P."/>
            <person name="Nandi T."/>
            <person name="Crabtree J."/>
            <person name="Badger J."/>
            <person name="Beckstrom-Sternberg S."/>
            <person name="Saqib M."/>
            <person name="Schutzer S.E."/>
            <person name="Keim P."/>
            <person name="Nierman W.C."/>
        </authorList>
    </citation>
    <scope>NUCLEOTIDE SEQUENCE [LARGE SCALE GENOMIC DNA]</scope>
    <source>
        <strain>NCTC 10247</strain>
    </source>
</reference>
<sequence length="214" mass="24295">MTTLADLRTNYSRASLDAADVNPNPFVQFDVWFKEALDAQLPEPNTMTLATVDESGRPSARIVLIKGADERGFVFFTNYESRKGRELAHNPNAALLFYWIELERQVRVEGRIEKTSEEESDRYFASRPLGSRIGAWASEQSAVIESRALLEAREKEIGARFGENPPRPPHWGGYRLVPSSIEFWQGRPSRLHDRLLYTRDAASASGWKITRLAP</sequence>
<comment type="function">
    <text evidence="1">Catalyzes the oxidation of either pyridoxine 5'-phosphate (PNP) or pyridoxamine 5'-phosphate (PMP) into pyridoxal 5'-phosphate (PLP).</text>
</comment>
<comment type="catalytic activity">
    <reaction evidence="1">
        <text>pyridoxamine 5'-phosphate + O2 + H2O = pyridoxal 5'-phosphate + H2O2 + NH4(+)</text>
        <dbReference type="Rhea" id="RHEA:15817"/>
        <dbReference type="ChEBI" id="CHEBI:15377"/>
        <dbReference type="ChEBI" id="CHEBI:15379"/>
        <dbReference type="ChEBI" id="CHEBI:16240"/>
        <dbReference type="ChEBI" id="CHEBI:28938"/>
        <dbReference type="ChEBI" id="CHEBI:58451"/>
        <dbReference type="ChEBI" id="CHEBI:597326"/>
        <dbReference type="EC" id="1.4.3.5"/>
    </reaction>
</comment>
<comment type="catalytic activity">
    <reaction evidence="1">
        <text>pyridoxine 5'-phosphate + O2 = pyridoxal 5'-phosphate + H2O2</text>
        <dbReference type="Rhea" id="RHEA:15149"/>
        <dbReference type="ChEBI" id="CHEBI:15379"/>
        <dbReference type="ChEBI" id="CHEBI:16240"/>
        <dbReference type="ChEBI" id="CHEBI:58589"/>
        <dbReference type="ChEBI" id="CHEBI:597326"/>
        <dbReference type="EC" id="1.4.3.5"/>
    </reaction>
</comment>
<comment type="cofactor">
    <cofactor evidence="1">
        <name>FMN</name>
        <dbReference type="ChEBI" id="CHEBI:58210"/>
    </cofactor>
    <text evidence="1">Binds 1 FMN per subunit.</text>
</comment>
<comment type="pathway">
    <text evidence="1">Cofactor metabolism; pyridoxal 5'-phosphate salvage; pyridoxal 5'-phosphate from pyridoxamine 5'-phosphate: step 1/1.</text>
</comment>
<comment type="pathway">
    <text evidence="1">Cofactor metabolism; pyridoxal 5'-phosphate salvage; pyridoxal 5'-phosphate from pyridoxine 5'-phosphate: step 1/1.</text>
</comment>
<comment type="subunit">
    <text evidence="1">Homodimer.</text>
</comment>
<comment type="similarity">
    <text evidence="1">Belongs to the pyridoxamine 5'-phosphate oxidase family.</text>
</comment>
<protein>
    <recommendedName>
        <fullName evidence="1">Pyridoxine/pyridoxamine 5'-phosphate oxidase</fullName>
        <ecNumber evidence="1">1.4.3.5</ecNumber>
    </recommendedName>
    <alternativeName>
        <fullName evidence="1">PNP/PMP oxidase</fullName>
        <shortName evidence="1">PNPOx</shortName>
    </alternativeName>
    <alternativeName>
        <fullName evidence="1">Pyridoxal 5'-phosphate synthase</fullName>
    </alternativeName>
</protein>
<proteinExistence type="inferred from homology"/>
<dbReference type="EC" id="1.4.3.5" evidence="1"/>
<dbReference type="EMBL" id="CP000548">
    <property type="protein sequence ID" value="ABO04885.1"/>
    <property type="molecule type" value="Genomic_DNA"/>
</dbReference>
<dbReference type="RefSeq" id="WP_004188935.1">
    <property type="nucleotide sequence ID" value="NZ_CP007802.1"/>
</dbReference>
<dbReference type="SMR" id="A3MHF0"/>
<dbReference type="GeneID" id="92978130"/>
<dbReference type="KEGG" id="bmaz:BM44_2870"/>
<dbReference type="KEGG" id="bmn:BMA10247_0107"/>
<dbReference type="PATRIC" id="fig|320389.8.peg.3239"/>
<dbReference type="UniPathway" id="UPA01068">
    <property type="reaction ID" value="UER00304"/>
</dbReference>
<dbReference type="UniPathway" id="UPA01068">
    <property type="reaction ID" value="UER00305"/>
</dbReference>
<dbReference type="GO" id="GO:0010181">
    <property type="term" value="F:FMN binding"/>
    <property type="evidence" value="ECO:0007669"/>
    <property type="project" value="UniProtKB-UniRule"/>
</dbReference>
<dbReference type="GO" id="GO:0004733">
    <property type="term" value="F:pyridoxamine phosphate oxidase activity"/>
    <property type="evidence" value="ECO:0007669"/>
    <property type="project" value="UniProtKB-UniRule"/>
</dbReference>
<dbReference type="GO" id="GO:0008615">
    <property type="term" value="P:pyridoxine biosynthetic process"/>
    <property type="evidence" value="ECO:0007669"/>
    <property type="project" value="UniProtKB-KW"/>
</dbReference>
<dbReference type="FunFam" id="2.30.110.10:FF:000005">
    <property type="entry name" value="NAD(P)H-hydrate epimerase"/>
    <property type="match status" value="1"/>
</dbReference>
<dbReference type="Gene3D" id="2.30.110.10">
    <property type="entry name" value="Electron Transport, Fmn-binding Protein, Chain A"/>
    <property type="match status" value="1"/>
</dbReference>
<dbReference type="HAMAP" id="MF_01629">
    <property type="entry name" value="PdxH"/>
    <property type="match status" value="1"/>
</dbReference>
<dbReference type="InterPro" id="IPR000659">
    <property type="entry name" value="Pyridox_Oxase"/>
</dbReference>
<dbReference type="InterPro" id="IPR019740">
    <property type="entry name" value="Pyridox_Oxase_CS"/>
</dbReference>
<dbReference type="InterPro" id="IPR011576">
    <property type="entry name" value="Pyridox_Oxase_N"/>
</dbReference>
<dbReference type="InterPro" id="IPR019576">
    <property type="entry name" value="Pyridoxamine_oxidase_dimer_C"/>
</dbReference>
<dbReference type="InterPro" id="IPR012349">
    <property type="entry name" value="Split_barrel_FMN-bd"/>
</dbReference>
<dbReference type="NCBIfam" id="TIGR00558">
    <property type="entry name" value="pdxH"/>
    <property type="match status" value="1"/>
</dbReference>
<dbReference type="NCBIfam" id="NF004231">
    <property type="entry name" value="PRK05679.1"/>
    <property type="match status" value="1"/>
</dbReference>
<dbReference type="PANTHER" id="PTHR10851:SF0">
    <property type="entry name" value="PYRIDOXINE-5'-PHOSPHATE OXIDASE"/>
    <property type="match status" value="1"/>
</dbReference>
<dbReference type="PANTHER" id="PTHR10851">
    <property type="entry name" value="PYRIDOXINE-5-PHOSPHATE OXIDASE"/>
    <property type="match status" value="1"/>
</dbReference>
<dbReference type="Pfam" id="PF10590">
    <property type="entry name" value="PNP_phzG_C"/>
    <property type="match status" value="1"/>
</dbReference>
<dbReference type="Pfam" id="PF01243">
    <property type="entry name" value="PNPOx_N"/>
    <property type="match status" value="1"/>
</dbReference>
<dbReference type="PIRSF" id="PIRSF000190">
    <property type="entry name" value="Pyd_amn-ph_oxd"/>
    <property type="match status" value="1"/>
</dbReference>
<dbReference type="SUPFAM" id="SSF50475">
    <property type="entry name" value="FMN-binding split barrel"/>
    <property type="match status" value="1"/>
</dbReference>
<dbReference type="PROSITE" id="PS01064">
    <property type="entry name" value="PYRIDOX_OXIDASE"/>
    <property type="match status" value="1"/>
</dbReference>
<keyword id="KW-0285">Flavoprotein</keyword>
<keyword id="KW-0288">FMN</keyword>
<keyword id="KW-0560">Oxidoreductase</keyword>
<keyword id="KW-0664">Pyridoxine biosynthesis</keyword>
<accession>A3MHF0</accession>
<evidence type="ECO:0000255" key="1">
    <source>
        <dbReference type="HAMAP-Rule" id="MF_01629"/>
    </source>
</evidence>
<name>PDXH_BURM7</name>
<organism>
    <name type="scientific">Burkholderia mallei (strain NCTC 10247)</name>
    <dbReference type="NCBI Taxonomy" id="320389"/>
    <lineage>
        <taxon>Bacteria</taxon>
        <taxon>Pseudomonadati</taxon>
        <taxon>Pseudomonadota</taxon>
        <taxon>Betaproteobacteria</taxon>
        <taxon>Burkholderiales</taxon>
        <taxon>Burkholderiaceae</taxon>
        <taxon>Burkholderia</taxon>
        <taxon>pseudomallei group</taxon>
    </lineage>
</organism>
<gene>
    <name evidence="1" type="primary">pdxH</name>
    <name type="ordered locus">BMA10247_0107</name>
</gene>
<feature type="chain" id="PRO_1000069684" description="Pyridoxine/pyridoxamine 5'-phosphate oxidase">
    <location>
        <begin position="1"/>
        <end position="214"/>
    </location>
</feature>
<feature type="binding site" evidence="1">
    <location>
        <begin position="8"/>
        <end position="11"/>
    </location>
    <ligand>
        <name>substrate</name>
    </ligand>
</feature>
<feature type="binding site" evidence="1">
    <location>
        <begin position="61"/>
        <end position="66"/>
    </location>
    <ligand>
        <name>FMN</name>
        <dbReference type="ChEBI" id="CHEBI:58210"/>
    </ligand>
</feature>
<feature type="binding site" evidence="1">
    <location>
        <position position="66"/>
    </location>
    <ligand>
        <name>substrate</name>
    </ligand>
</feature>
<feature type="binding site" evidence="1">
    <location>
        <begin position="76"/>
        <end position="77"/>
    </location>
    <ligand>
        <name>FMN</name>
        <dbReference type="ChEBI" id="CHEBI:58210"/>
    </ligand>
</feature>
<feature type="binding site" evidence="1">
    <location>
        <position position="82"/>
    </location>
    <ligand>
        <name>FMN</name>
        <dbReference type="ChEBI" id="CHEBI:58210"/>
    </ligand>
</feature>
<feature type="binding site" evidence="1">
    <location>
        <position position="83"/>
    </location>
    <ligand>
        <name>FMN</name>
        <dbReference type="ChEBI" id="CHEBI:58210"/>
    </ligand>
</feature>
<feature type="binding site" evidence="1">
    <location>
        <position position="105"/>
    </location>
    <ligand>
        <name>FMN</name>
        <dbReference type="ChEBI" id="CHEBI:58210"/>
    </ligand>
</feature>
<feature type="binding site" evidence="1">
    <location>
        <position position="123"/>
    </location>
    <ligand>
        <name>substrate</name>
    </ligand>
</feature>
<feature type="binding site" evidence="1">
    <location>
        <position position="127"/>
    </location>
    <ligand>
        <name>substrate</name>
    </ligand>
</feature>
<feature type="binding site" evidence="1">
    <location>
        <position position="131"/>
    </location>
    <ligand>
        <name>substrate</name>
    </ligand>
</feature>
<feature type="binding site" evidence="1">
    <location>
        <begin position="140"/>
        <end position="141"/>
    </location>
    <ligand>
        <name>FMN</name>
        <dbReference type="ChEBI" id="CHEBI:58210"/>
    </ligand>
</feature>
<feature type="binding site" evidence="1">
    <location>
        <position position="184"/>
    </location>
    <ligand>
        <name>FMN</name>
        <dbReference type="ChEBI" id="CHEBI:58210"/>
    </ligand>
</feature>
<feature type="binding site" evidence="1">
    <location>
        <begin position="190"/>
        <end position="192"/>
    </location>
    <ligand>
        <name>substrate</name>
    </ligand>
</feature>
<feature type="binding site" evidence="1">
    <location>
        <position position="194"/>
    </location>
    <ligand>
        <name>FMN</name>
        <dbReference type="ChEBI" id="CHEBI:58210"/>
    </ligand>
</feature>